<keyword id="KW-0029">Amino-acid transport</keyword>
<keyword id="KW-0067">ATP-binding</keyword>
<keyword id="KW-0997">Cell inner membrane</keyword>
<keyword id="KW-1003">Cell membrane</keyword>
<keyword id="KW-0472">Membrane</keyword>
<keyword id="KW-0547">Nucleotide-binding</keyword>
<keyword id="KW-1185">Reference proteome</keyword>
<keyword id="KW-1278">Translocase</keyword>
<keyword id="KW-0813">Transport</keyword>
<comment type="function">
    <text evidence="2 3 4 5 6 8">Part of the ABC transporter complex TcyJLN involved in L-cystine import (PubMed:20351115, PubMed:25139244, PubMed:25837721, PubMed:26350134). This high affinity cystine transporter is involved in resistance to oxidative stress by forming a L-cysteine/L-cystine shuttle system with the EamA transporter, which exports L-cysteine as reducing equivalents to the periplasm to prevent the cells from oxidative stress. Exported L-cysteine can reduce the periplasmic hydrogen peroxide to water, and then generated L-cystine is imported back into the cytoplasm via the TcyJLN complex (PubMed:20351115, PubMed:25837721). Functions at low cystine concentrations (PubMed:26350134). The system can also transport L-cysteine, diaminopimelic acid (DAP), djenkolate, lanthionine, D-cystine, homocystine, and it mediates accumulation of the toxic compounds L-selenaproline (SCA) and L-selenocystine (SeCys) (PubMed:25139244, PubMed:26350134). Could also facilitate threonine efflux (PubMed:28911185). Responsible for energy coupling to the transport system (Probable).</text>
</comment>
<comment type="catalytic activity">
    <reaction evidence="10">
        <text>L-cystine(out) + ATP + H2O = L-cystine(in) + ADP + phosphate + H(+)</text>
        <dbReference type="Rhea" id="RHEA:62576"/>
        <dbReference type="ChEBI" id="CHEBI:15377"/>
        <dbReference type="ChEBI" id="CHEBI:15378"/>
        <dbReference type="ChEBI" id="CHEBI:30616"/>
        <dbReference type="ChEBI" id="CHEBI:35491"/>
        <dbReference type="ChEBI" id="CHEBI:43474"/>
        <dbReference type="ChEBI" id="CHEBI:456216"/>
        <dbReference type="EC" id="7.4.2.12"/>
    </reaction>
</comment>
<comment type="catalytic activity">
    <reaction evidence="10">
        <text>D-cystine(out) + ATP + H2O = D-cystine(in) + ADP + phosphate + H(+)</text>
        <dbReference type="Rhea" id="RHEA:62580"/>
        <dbReference type="ChEBI" id="CHEBI:15377"/>
        <dbReference type="ChEBI" id="CHEBI:15378"/>
        <dbReference type="ChEBI" id="CHEBI:30616"/>
        <dbReference type="ChEBI" id="CHEBI:43474"/>
        <dbReference type="ChEBI" id="CHEBI:145813"/>
        <dbReference type="ChEBI" id="CHEBI:456216"/>
        <dbReference type="EC" id="7.4.2.12"/>
    </reaction>
</comment>
<comment type="activity regulation">
    <text evidence="3">The TcyJLN system is inhibited by L-cystine, L-cysteine, DL-2,6-diaminopimelic acid and L-cystathionine, and is stimulated by D-cysteine.</text>
</comment>
<comment type="subunit">
    <text evidence="9 10">The complex is composed of two ATP-binding proteins (TcyN), two transmembrane proteins (TcyL) and a solute-binding protein (TcyJ).</text>
</comment>
<comment type="subcellular location">
    <subcellularLocation>
        <location evidence="8">Cell inner membrane</location>
        <topology evidence="8">Peripheral membrane protein</topology>
    </subcellularLocation>
</comment>
<comment type="induction">
    <text evidence="4">Expression is induced by H(2)O(2).</text>
</comment>
<comment type="disruption phenotype">
    <text evidence="4">Disruption of the gene decreases uptake of cystine.</text>
</comment>
<comment type="similarity">
    <text evidence="8">Belongs to the ABC transporter superfamily.</text>
</comment>
<dbReference type="EC" id="7.4.2.12" evidence="10"/>
<dbReference type="EMBL" id="U00096">
    <property type="protein sequence ID" value="AAC74984.1"/>
    <property type="molecule type" value="Genomic_DNA"/>
</dbReference>
<dbReference type="EMBL" id="AP009048">
    <property type="protein sequence ID" value="BAA15737.1"/>
    <property type="molecule type" value="Genomic_DNA"/>
</dbReference>
<dbReference type="EMBL" id="X03691">
    <property type="status" value="NOT_ANNOTATED_CDS"/>
    <property type="molecule type" value="Genomic_DNA"/>
</dbReference>
<dbReference type="PIR" id="B64955">
    <property type="entry name" value="B64955"/>
</dbReference>
<dbReference type="RefSeq" id="NP_416427.1">
    <property type="nucleotide sequence ID" value="NC_000913.3"/>
</dbReference>
<dbReference type="RefSeq" id="WP_001272991.1">
    <property type="nucleotide sequence ID" value="NZ_LN832404.1"/>
</dbReference>
<dbReference type="SMR" id="P37774"/>
<dbReference type="BioGRID" id="4260366">
    <property type="interactions" value="22"/>
</dbReference>
<dbReference type="ComplexPortal" id="CPX-4406">
    <property type="entry name" value="L-cystine ABC transporter complex"/>
</dbReference>
<dbReference type="DIP" id="DIP-11822N"/>
<dbReference type="FunCoup" id="P37774">
    <property type="interactions" value="354"/>
</dbReference>
<dbReference type="IntAct" id="P37774">
    <property type="interactions" value="5"/>
</dbReference>
<dbReference type="STRING" id="511145.b1917"/>
<dbReference type="TCDB" id="3.A.1.3.10">
    <property type="family name" value="the atp-binding cassette (abc) superfamily"/>
</dbReference>
<dbReference type="jPOST" id="P37774"/>
<dbReference type="PaxDb" id="511145-b1917"/>
<dbReference type="EnsemblBacteria" id="AAC74984">
    <property type="protein sequence ID" value="AAC74984"/>
    <property type="gene ID" value="b1917"/>
</dbReference>
<dbReference type="GeneID" id="946422"/>
<dbReference type="KEGG" id="ecj:JW1902"/>
<dbReference type="KEGG" id="eco:b1917"/>
<dbReference type="KEGG" id="ecoc:C3026_10880"/>
<dbReference type="PATRIC" id="fig|1411691.4.peg.332"/>
<dbReference type="EchoBASE" id="EB2251"/>
<dbReference type="eggNOG" id="COG1126">
    <property type="taxonomic scope" value="Bacteria"/>
</dbReference>
<dbReference type="HOGENOM" id="CLU_000604_1_22_6"/>
<dbReference type="InParanoid" id="P37774"/>
<dbReference type="OMA" id="GTHDYEL"/>
<dbReference type="OrthoDB" id="9802264at2"/>
<dbReference type="PhylomeDB" id="P37774"/>
<dbReference type="BioCyc" id="EcoCyc:EG12347-MONOMER"/>
<dbReference type="BioCyc" id="MetaCyc:EG12347-MONOMER"/>
<dbReference type="PRO" id="PR:P37774"/>
<dbReference type="Proteomes" id="UP000000625">
    <property type="component" value="Chromosome"/>
</dbReference>
<dbReference type="GO" id="GO:0055052">
    <property type="term" value="C:ATP-binding cassette (ABC) transporter complex, substrate-binding subunit-containing"/>
    <property type="evidence" value="ECO:0000303"/>
    <property type="project" value="ComplexPortal"/>
</dbReference>
<dbReference type="GO" id="GO:0005886">
    <property type="term" value="C:plasma membrane"/>
    <property type="evidence" value="ECO:0000314"/>
    <property type="project" value="EcoCyc"/>
</dbReference>
<dbReference type="GO" id="GO:0015424">
    <property type="term" value="F:ABC-type amino acid transporter activity"/>
    <property type="evidence" value="ECO:0007669"/>
    <property type="project" value="InterPro"/>
</dbReference>
<dbReference type="GO" id="GO:0005524">
    <property type="term" value="F:ATP binding"/>
    <property type="evidence" value="ECO:0000255"/>
    <property type="project" value="EcoCyc"/>
</dbReference>
<dbReference type="GO" id="GO:0016887">
    <property type="term" value="F:ATP hydrolysis activity"/>
    <property type="evidence" value="ECO:0007669"/>
    <property type="project" value="InterPro"/>
</dbReference>
<dbReference type="GO" id="GO:0015184">
    <property type="term" value="F:L-cystine transmembrane transporter activity"/>
    <property type="evidence" value="ECO:0000314"/>
    <property type="project" value="EcoCyc"/>
</dbReference>
<dbReference type="GO" id="GO:1903712">
    <property type="term" value="P:cysteine transmembrane transport"/>
    <property type="evidence" value="ECO:0000303"/>
    <property type="project" value="ComplexPortal"/>
</dbReference>
<dbReference type="GO" id="GO:0015811">
    <property type="term" value="P:L-cystine transport"/>
    <property type="evidence" value="ECO:0000314"/>
    <property type="project" value="EcoCyc"/>
</dbReference>
<dbReference type="CDD" id="cd03262">
    <property type="entry name" value="ABC_HisP_GlnQ"/>
    <property type="match status" value="1"/>
</dbReference>
<dbReference type="FunFam" id="3.40.50.300:FF:000020">
    <property type="entry name" value="Amino acid ABC transporter ATP-binding component"/>
    <property type="match status" value="1"/>
</dbReference>
<dbReference type="Gene3D" id="3.40.50.300">
    <property type="entry name" value="P-loop containing nucleotide triphosphate hydrolases"/>
    <property type="match status" value="1"/>
</dbReference>
<dbReference type="InterPro" id="IPR003593">
    <property type="entry name" value="AAA+_ATPase"/>
</dbReference>
<dbReference type="InterPro" id="IPR030679">
    <property type="entry name" value="ABC_ATPase_HisP-typ"/>
</dbReference>
<dbReference type="InterPro" id="IPR003439">
    <property type="entry name" value="ABC_transporter-like_ATP-bd"/>
</dbReference>
<dbReference type="InterPro" id="IPR017871">
    <property type="entry name" value="ABC_transporter-like_CS"/>
</dbReference>
<dbReference type="InterPro" id="IPR050086">
    <property type="entry name" value="MetN_ABC_transporter-like"/>
</dbReference>
<dbReference type="InterPro" id="IPR027417">
    <property type="entry name" value="P-loop_NTPase"/>
</dbReference>
<dbReference type="NCBIfam" id="NF008428">
    <property type="entry name" value="PRK11264.1"/>
    <property type="match status" value="1"/>
</dbReference>
<dbReference type="PANTHER" id="PTHR43166">
    <property type="entry name" value="AMINO ACID IMPORT ATP-BINDING PROTEIN"/>
    <property type="match status" value="1"/>
</dbReference>
<dbReference type="PANTHER" id="PTHR43166:SF38">
    <property type="entry name" value="L-CYSTINE TRANSPORT SYSTEM ATP-BINDING PROTEIN TCYN"/>
    <property type="match status" value="1"/>
</dbReference>
<dbReference type="Pfam" id="PF00005">
    <property type="entry name" value="ABC_tran"/>
    <property type="match status" value="1"/>
</dbReference>
<dbReference type="PIRSF" id="PIRSF039085">
    <property type="entry name" value="ABC_ATPase_HisP"/>
    <property type="match status" value="1"/>
</dbReference>
<dbReference type="SMART" id="SM00382">
    <property type="entry name" value="AAA"/>
    <property type="match status" value="1"/>
</dbReference>
<dbReference type="SUPFAM" id="SSF52540">
    <property type="entry name" value="P-loop containing nucleoside triphosphate hydrolases"/>
    <property type="match status" value="1"/>
</dbReference>
<dbReference type="PROSITE" id="PS00211">
    <property type="entry name" value="ABC_TRANSPORTER_1"/>
    <property type="match status" value="1"/>
</dbReference>
<dbReference type="PROSITE" id="PS50893">
    <property type="entry name" value="ABC_TRANSPORTER_2"/>
    <property type="match status" value="1"/>
</dbReference>
<gene>
    <name evidence="7" type="primary">tcyN</name>
    <name type="synonym">yecC</name>
    <name type="ordered locus">b1917</name>
    <name type="ordered locus">JW1902</name>
</gene>
<reference key="1">
    <citation type="journal article" date="1996" name="DNA Res.">
        <title>A 460-kb DNA sequence of the Escherichia coli K-12 genome corresponding to the 40.1-50.0 min region on the linkage map.</title>
        <authorList>
            <person name="Itoh T."/>
            <person name="Aiba H."/>
            <person name="Baba T."/>
            <person name="Fujita K."/>
            <person name="Hayashi K."/>
            <person name="Inada T."/>
            <person name="Isono K."/>
            <person name="Kasai H."/>
            <person name="Kimura S."/>
            <person name="Kitakawa M."/>
            <person name="Kitagawa M."/>
            <person name="Makino K."/>
            <person name="Miki T."/>
            <person name="Mizobuchi K."/>
            <person name="Mori H."/>
            <person name="Mori T."/>
            <person name="Motomura K."/>
            <person name="Nakade S."/>
            <person name="Nakamura Y."/>
            <person name="Nashimoto H."/>
            <person name="Nishio Y."/>
            <person name="Oshima T."/>
            <person name="Saito N."/>
            <person name="Sampei G."/>
            <person name="Seki Y."/>
            <person name="Sivasundaram S."/>
            <person name="Tagami H."/>
            <person name="Takeda J."/>
            <person name="Takemoto K."/>
            <person name="Wada C."/>
            <person name="Yamamoto Y."/>
            <person name="Horiuchi T."/>
        </authorList>
    </citation>
    <scope>NUCLEOTIDE SEQUENCE [LARGE SCALE GENOMIC DNA]</scope>
    <source>
        <strain>K12 / W3110 / ATCC 27325 / DSM 5911</strain>
    </source>
</reference>
<reference key="2">
    <citation type="journal article" date="1997" name="Science">
        <title>The complete genome sequence of Escherichia coli K-12.</title>
        <authorList>
            <person name="Blattner F.R."/>
            <person name="Plunkett G. III"/>
            <person name="Bloch C.A."/>
            <person name="Perna N.T."/>
            <person name="Burland V."/>
            <person name="Riley M."/>
            <person name="Collado-Vides J."/>
            <person name="Glasner J.D."/>
            <person name="Rode C.K."/>
            <person name="Mayhew G.F."/>
            <person name="Gregor J."/>
            <person name="Davis N.W."/>
            <person name="Kirkpatrick H.A."/>
            <person name="Goeden M.A."/>
            <person name="Rose D.J."/>
            <person name="Mau B."/>
            <person name="Shao Y."/>
        </authorList>
    </citation>
    <scope>NUCLEOTIDE SEQUENCE [LARGE SCALE GENOMIC DNA]</scope>
    <source>
        <strain>K12 / MG1655 / ATCC 47076</strain>
    </source>
</reference>
<reference key="3">
    <citation type="journal article" date="2006" name="Mol. Syst. Biol.">
        <title>Highly accurate genome sequences of Escherichia coli K-12 strains MG1655 and W3110.</title>
        <authorList>
            <person name="Hayashi K."/>
            <person name="Morooka N."/>
            <person name="Yamamoto Y."/>
            <person name="Fujita K."/>
            <person name="Isono K."/>
            <person name="Choi S."/>
            <person name="Ohtsubo E."/>
            <person name="Baba T."/>
            <person name="Wanner B.L."/>
            <person name="Mori H."/>
            <person name="Horiuchi T."/>
        </authorList>
    </citation>
    <scope>NUCLEOTIDE SEQUENCE [LARGE SCALE GENOMIC DNA]</scope>
    <source>
        <strain>K12 / W3110 / ATCC 27325 / DSM 5911</strain>
    </source>
</reference>
<reference key="4">
    <citation type="journal article" date="1986" name="Nucleic Acids Res.">
        <title>Multiple control elements for the uvrC gene unit of Escherichia coli.</title>
        <authorList>
            <person name="Sharma S."/>
            <person name="Stark T.F."/>
            <person name="Beattie W.G."/>
            <person name="Moses R.E."/>
        </authorList>
    </citation>
    <scope>NUCLEOTIDE SEQUENCE [GENOMIC DNA] OF 176-250</scope>
</reference>
<reference key="5">
    <citation type="journal article" date="1994" name="Nucleic Acids Res.">
        <title>Intrinsic and extrinsic approaches for detecting genes in a bacterial genome.</title>
        <authorList>
            <person name="Borodovsky M."/>
            <person name="Rudd K.E."/>
            <person name="Koonin E.V."/>
        </authorList>
    </citation>
    <scope>IDENTIFICATION</scope>
</reference>
<reference key="6">
    <citation type="journal article" date="2010" name="J. Biol. Chem.">
        <title>The L-cysteine/L-cystine shuttle system provides reducing equivalents to the periplasm in Escherichia coli.</title>
        <authorList>
            <person name="Ohtsu I."/>
            <person name="Wiriyathanawudhiwong N."/>
            <person name="Morigasaki S."/>
            <person name="Nakatani T."/>
            <person name="Kadokura H."/>
            <person name="Takagi H."/>
        </authorList>
    </citation>
    <scope>FUNCTION</scope>
</reference>
<reference key="7">
    <citation type="journal article" date="2014" name="J. Appl. Microbiol.">
        <title>Susceptibility of Escherichia coli to the toxic L-proline analogue L-selenaproline is dependent on two L-cystine transport systems.</title>
        <authorList>
            <person name="Deutch C.E."/>
            <person name="Spahija I."/>
            <person name="Wagner C.E."/>
        </authorList>
    </citation>
    <scope>FUNCTION</scope>
    <scope>ACTIVITY REGULATION</scope>
    <source>
        <strain>K12</strain>
    </source>
</reference>
<reference key="8">
    <citation type="journal article" date="2015" name="PLoS ONE">
        <title>Uptake of L-cystine via an ABC transporter contributes defense of oxidative stress in the L-cystine export-dependent manner in Escherichia coli.</title>
        <authorList>
            <person name="Ohtsu I."/>
            <person name="Kawano Y."/>
            <person name="Suzuki M."/>
            <person name="Morigasaki S."/>
            <person name="Saiki K."/>
            <person name="Yamazaki S."/>
            <person name="Nonaka G."/>
            <person name="Takagi H."/>
        </authorList>
    </citation>
    <scope>FUNCTION</scope>
    <scope>SUBUNIT</scope>
    <scope>INDUCTION</scope>
    <scope>DISRUPTION PHENOTYPE</scope>
</reference>
<reference key="9">
    <citation type="journal article" date="2015" name="J. Bacteriol.">
        <title>Physiological roles and adverse effects of the two cystine importers of Escherichia coli.</title>
        <authorList>
            <person name="Chonoles Imlay K.R."/>
            <person name="Korshunov S."/>
            <person name="Imlay J.A."/>
        </authorList>
    </citation>
    <scope>FUNCTION</scope>
    <scope>CATALYTIC ACTIVITY</scope>
    <scope>SUBUNIT</scope>
    <scope>INDUCTION</scope>
    <scope>DISRUPTION PHENOTYPE</scope>
</reference>
<reference key="10">
    <citation type="journal article" date="2017" name="FEMS Microbiol. Lett.">
        <title>Identification of a new gene yecC involved in threonine export in Escherichia coli.</title>
        <authorList>
            <person name="Xu Y."/>
            <person name="Liu Y."/>
            <person name="Li F."/>
            <person name="Cao G."/>
            <person name="Zheng P."/>
            <person name="Sun J."/>
            <person name="Wen J."/>
            <person name="Zhang D."/>
        </authorList>
    </citation>
    <scope>FUNCTION IN THREONINE EXPORT</scope>
    <source>
        <strain>K12 / MG1655 / ATCC 47076</strain>
    </source>
</reference>
<organism>
    <name type="scientific">Escherichia coli (strain K12)</name>
    <dbReference type="NCBI Taxonomy" id="83333"/>
    <lineage>
        <taxon>Bacteria</taxon>
        <taxon>Pseudomonadati</taxon>
        <taxon>Pseudomonadota</taxon>
        <taxon>Gammaproteobacteria</taxon>
        <taxon>Enterobacterales</taxon>
        <taxon>Enterobacteriaceae</taxon>
        <taxon>Escherichia</taxon>
    </lineage>
</organism>
<protein>
    <recommendedName>
        <fullName evidence="8">L-cystine transport system ATP-binding protein TcyN</fullName>
        <ecNumber evidence="10">7.4.2.12</ecNumber>
    </recommendedName>
</protein>
<evidence type="ECO:0000255" key="1">
    <source>
        <dbReference type="PROSITE-ProRule" id="PRU00434"/>
    </source>
</evidence>
<evidence type="ECO:0000269" key="2">
    <source>
    </source>
</evidence>
<evidence type="ECO:0000269" key="3">
    <source>
    </source>
</evidence>
<evidence type="ECO:0000269" key="4">
    <source>
    </source>
</evidence>
<evidence type="ECO:0000269" key="5">
    <source>
    </source>
</evidence>
<evidence type="ECO:0000269" key="6">
    <source>
    </source>
</evidence>
<evidence type="ECO:0000303" key="7">
    <source>
    </source>
</evidence>
<evidence type="ECO:0000305" key="8"/>
<evidence type="ECO:0000305" key="9">
    <source>
    </source>
</evidence>
<evidence type="ECO:0000305" key="10">
    <source>
    </source>
</evidence>
<sequence>MSAIEVKNLVKKFHGQTVLHGIDLEVKPGEVVAIIGPSGSGKTTLLRSINLLEQPEAGTITVGDITIDTARSLSQQKSLIRQLRQHVGFVFQNFNLFPHRTVLENIIEGPVIVKGEPKEEATARARELLAKVGLAGKETSYPRRLSGGQQQRVAIARALAMRPEVILFDEPTSALDPELVGEVLNTIRQLAQEKRTMVIVTHEMSFARDVADRAIFMDQGRIVEQGAAKALFADPEQPRTRQFLEKFLLQ</sequence>
<accession>P37774</accession>
<accession>P76314</accession>
<feature type="chain" id="PRO_0000093166" description="L-cystine transport system ATP-binding protein TcyN">
    <location>
        <begin position="1"/>
        <end position="250"/>
    </location>
</feature>
<feature type="domain" description="ABC transporter" evidence="1">
    <location>
        <begin position="4"/>
        <end position="244"/>
    </location>
</feature>
<feature type="binding site" evidence="1">
    <location>
        <begin position="36"/>
        <end position="43"/>
    </location>
    <ligand>
        <name>ATP</name>
        <dbReference type="ChEBI" id="CHEBI:30616"/>
    </ligand>
</feature>
<proteinExistence type="evidence at protein level"/>
<name>TCYN_ECOLI</name>